<accession>Q99J23</accession>
<accession>A2A5D7</accession>
<accession>Q99J92</accession>
<proteinExistence type="evidence at transcript level"/>
<keyword id="KW-0256">Endoplasmic reticulum</keyword>
<keyword id="KW-0325">Glycoprotein</keyword>
<keyword id="KW-0539">Nucleus</keyword>
<keyword id="KW-1185">Reference proteome</keyword>
<keyword id="KW-0732">Signal</keyword>
<sequence length="532" mass="58508">MLLLWLLLLLLLLVPLLAILWQQRSRGARPCWLISLQHRVAWGMLGWAAAWQQWRLDRSTLNVGQSQQQALMWCLKKAQGSCCLPREDTDMRTFRNHLPLTQTSHTQEQESEETLPSPASPQYHGDASLQATLLGLITLNKAYPEALAPGSTACVTPTSPWPCSVPWLGHALGRVSPDGAKDPRTLLLEALISPGLRVLEARTAVELLDVFVGLEADGEELAEAIAAGILGTLLPKRAAELKEALEQGPRGLARRLWPKLQVVVTLDSGGQAEAVAALRVLWCQGLAFFSPAYAASGGVVALNLWPERPQGSYLLPPGVPFIELLPIKEGTQEEAASTLLLTDAQREKEYELVLTNHTSLTRCRLGDVVQVVGTYNQCPVVRFTCRLGQTLNVRGEVTDETVFSVALAQAVGQWPGAKLLDHVCVESRVLDSCEGSAPHYEVFVELRGLRNLSEENRDKLDNCLQEASAQYKSLRFRGSVGPAKVHLVRPGSFRVLREALAAFSSSSCRPPEMPRVIRLRHLAQLLQKRVIS</sequence>
<comment type="subcellular location">
    <subcellularLocation>
        <location evidence="3">Endoplasmic reticulum</location>
    </subcellularLocation>
    <subcellularLocation>
        <location evidence="3">Nucleus envelope</location>
    </subcellularLocation>
</comment>
<comment type="tissue specificity">
    <text evidence="3">Highly expressed in mammary tissues from mature virgins and at day 13 of pregnancy, and at lower level during lactation. Expressed at intermediate level in liver. Expressed at lower level in kidney, heart and brain.</text>
</comment>
<comment type="similarity">
    <text evidence="4">Belongs to the GH3 family.</text>
</comment>
<organism>
    <name type="scientific">Mus musculus</name>
    <name type="common">Mouse</name>
    <dbReference type="NCBI Taxonomy" id="10090"/>
    <lineage>
        <taxon>Eukaryota</taxon>
        <taxon>Metazoa</taxon>
        <taxon>Chordata</taxon>
        <taxon>Craniata</taxon>
        <taxon>Vertebrata</taxon>
        <taxon>Euteleostomi</taxon>
        <taxon>Mammalia</taxon>
        <taxon>Eutheria</taxon>
        <taxon>Euarchontoglires</taxon>
        <taxon>Glires</taxon>
        <taxon>Rodentia</taxon>
        <taxon>Myomorpha</taxon>
        <taxon>Muroidea</taxon>
        <taxon>Muridae</taxon>
        <taxon>Murinae</taxon>
        <taxon>Mus</taxon>
        <taxon>Mus</taxon>
    </lineage>
</organism>
<evidence type="ECO:0000255" key="1"/>
<evidence type="ECO:0000256" key="2">
    <source>
        <dbReference type="SAM" id="MobiDB-lite"/>
    </source>
</evidence>
<evidence type="ECO:0000269" key="3">
    <source>
    </source>
</evidence>
<evidence type="ECO:0000305" key="4"/>
<gene>
    <name type="primary">Ghdc</name>
    <name type="synonym">D11lgp1e</name>
    <name type="synonym">Lgp1</name>
</gene>
<feature type="signal peptide" evidence="1">
    <location>
        <begin position="1"/>
        <end position="18"/>
    </location>
</feature>
<feature type="chain" id="PRO_0000021594" description="GH3 domain-containing protein">
    <location>
        <begin position="19"/>
        <end position="532"/>
    </location>
</feature>
<feature type="region of interest" description="Disordered" evidence="2">
    <location>
        <begin position="100"/>
        <end position="123"/>
    </location>
</feature>
<feature type="glycosylation site" description="N-linked (GlcNAc...) asparagine" evidence="1">
    <location>
        <position position="356"/>
    </location>
</feature>
<feature type="glycosylation site" description="N-linked (GlcNAc...) asparagine" evidence="1">
    <location>
        <position position="451"/>
    </location>
</feature>
<feature type="sequence conflict" description="In Ref. 3; AAH05639." evidence="4" ref="3">
    <original>S</original>
    <variation>A</variation>
    <location>
        <position position="25"/>
    </location>
</feature>
<dbReference type="EMBL" id="AF316996">
    <property type="protein sequence ID" value="AAK15471.1"/>
    <property type="molecule type" value="mRNA"/>
</dbReference>
<dbReference type="EMBL" id="AF316998">
    <property type="protein sequence ID" value="AAK15473.1"/>
    <property type="molecule type" value="Genomic_DNA"/>
</dbReference>
<dbReference type="EMBL" id="AL591466">
    <property type="status" value="NOT_ANNOTATED_CDS"/>
    <property type="molecule type" value="Genomic_DNA"/>
</dbReference>
<dbReference type="EMBL" id="BC005639">
    <property type="protein sequence ID" value="AAH05639.1"/>
    <property type="molecule type" value="mRNA"/>
</dbReference>
<dbReference type="CCDS" id="CCDS25437.1"/>
<dbReference type="RefSeq" id="NP_114077.1">
    <property type="nucleotide sequence ID" value="NM_031871.2"/>
</dbReference>
<dbReference type="SMR" id="Q99J23"/>
<dbReference type="FunCoup" id="Q99J23">
    <property type="interactions" value="801"/>
</dbReference>
<dbReference type="STRING" id="10090.ENSMUSP00000017891"/>
<dbReference type="GlyCosmos" id="Q99J23">
    <property type="glycosylation" value="2 sites, No reported glycans"/>
</dbReference>
<dbReference type="GlyGen" id="Q99J23">
    <property type="glycosylation" value="3 sites"/>
</dbReference>
<dbReference type="iPTMnet" id="Q99J23"/>
<dbReference type="PhosphoSitePlus" id="Q99J23"/>
<dbReference type="SwissPalm" id="Q99J23"/>
<dbReference type="PaxDb" id="10090-ENSMUSP00000017891"/>
<dbReference type="ProteomicsDB" id="271219"/>
<dbReference type="Pumba" id="Q99J23"/>
<dbReference type="Antibodypedia" id="29163">
    <property type="antibodies" value="91 antibodies from 23 providers"/>
</dbReference>
<dbReference type="Ensembl" id="ENSMUST00000017891.14">
    <property type="protein sequence ID" value="ENSMUSP00000017891.8"/>
    <property type="gene ID" value="ENSMUSG00000017747.14"/>
</dbReference>
<dbReference type="GeneID" id="80860"/>
<dbReference type="KEGG" id="mmu:80860"/>
<dbReference type="UCSC" id="uc007lmh.1">
    <property type="organism name" value="mouse"/>
</dbReference>
<dbReference type="AGR" id="MGI:1931556"/>
<dbReference type="CTD" id="84514"/>
<dbReference type="MGI" id="MGI:1931556">
    <property type="gene designation" value="Ghdc"/>
</dbReference>
<dbReference type="VEuPathDB" id="HostDB:ENSMUSG00000017747"/>
<dbReference type="eggNOG" id="ENOG502QPMW">
    <property type="taxonomic scope" value="Eukaryota"/>
</dbReference>
<dbReference type="GeneTree" id="ENSGT00390000016401"/>
<dbReference type="HOGENOM" id="CLU_038581_1_0_1"/>
<dbReference type="InParanoid" id="Q99J23"/>
<dbReference type="OMA" id="HKLDHCL"/>
<dbReference type="OrthoDB" id="10004661at2759"/>
<dbReference type="TreeFam" id="TF333007"/>
<dbReference type="Reactome" id="R-MMU-6798695">
    <property type="pathway name" value="Neutrophil degranulation"/>
</dbReference>
<dbReference type="BioGRID-ORCS" id="80860">
    <property type="hits" value="2 hits in 78 CRISPR screens"/>
</dbReference>
<dbReference type="ChiTaRS" id="Ghdc">
    <property type="organism name" value="mouse"/>
</dbReference>
<dbReference type="PRO" id="PR:Q99J23"/>
<dbReference type="Proteomes" id="UP000000589">
    <property type="component" value="Chromosome 11"/>
</dbReference>
<dbReference type="RNAct" id="Q99J23">
    <property type="molecule type" value="protein"/>
</dbReference>
<dbReference type="Bgee" id="ENSMUSG00000017747">
    <property type="expression patterns" value="Expressed in saccule of membranous labyrinth and 127 other cell types or tissues"/>
</dbReference>
<dbReference type="ExpressionAtlas" id="Q99J23">
    <property type="expression patterns" value="baseline and differential"/>
</dbReference>
<dbReference type="GO" id="GO:0005783">
    <property type="term" value="C:endoplasmic reticulum"/>
    <property type="evidence" value="ECO:0000314"/>
    <property type="project" value="MGI"/>
</dbReference>
<dbReference type="GO" id="GO:0005635">
    <property type="term" value="C:nuclear envelope"/>
    <property type="evidence" value="ECO:0007669"/>
    <property type="project" value="UniProtKB-SubCell"/>
</dbReference>
<dbReference type="InterPro" id="IPR004993">
    <property type="entry name" value="GH3"/>
</dbReference>
<dbReference type="InterPro" id="IPR055378">
    <property type="entry name" value="GH3_C"/>
</dbReference>
<dbReference type="InterPro" id="IPR055377">
    <property type="entry name" value="GH3_M"/>
</dbReference>
<dbReference type="InterPro" id="IPR056985">
    <property type="entry name" value="GH3_N"/>
</dbReference>
<dbReference type="PANTHER" id="PTHR31901">
    <property type="entry name" value="GH3 DOMAIN-CONTAINING PROTEIN"/>
    <property type="match status" value="1"/>
</dbReference>
<dbReference type="PANTHER" id="PTHR31901:SF9">
    <property type="entry name" value="GH3 DOMAIN-CONTAINING PROTEIN"/>
    <property type="match status" value="1"/>
</dbReference>
<dbReference type="Pfam" id="PF23572">
    <property type="entry name" value="GH3_C"/>
    <property type="match status" value="1"/>
</dbReference>
<dbReference type="Pfam" id="PF23571">
    <property type="entry name" value="GH3_M"/>
    <property type="match status" value="1"/>
</dbReference>
<dbReference type="Pfam" id="PF25146">
    <property type="entry name" value="GH3_N_vert"/>
    <property type="match status" value="1"/>
</dbReference>
<protein>
    <recommendedName>
        <fullName>GH3 domain-containing protein</fullName>
    </recommendedName>
</protein>
<reference key="1">
    <citation type="journal article" date="2001" name="Genomics">
        <title>Structure of the mouse Stat 3/5 locus: evolution from Drosophila to zebrafish to mouse.</title>
        <authorList>
            <person name="Miyoshi K."/>
            <person name="Cui Y."/>
            <person name="Riedlinger G."/>
            <person name="Robinson P."/>
            <person name="Lehoczky J."/>
            <person name="Zon L."/>
            <person name="Oka T."/>
            <person name="Dewar K."/>
            <person name="Hennighausen L."/>
        </authorList>
    </citation>
    <scope>NUCLEOTIDE SEQUENCE [GENOMIC DNA / MRNA]</scope>
</reference>
<reference key="2">
    <citation type="journal article" date="2009" name="PLoS Biol.">
        <title>Lineage-specific biology revealed by a finished genome assembly of the mouse.</title>
        <authorList>
            <person name="Church D.M."/>
            <person name="Goodstadt L."/>
            <person name="Hillier L.W."/>
            <person name="Zody M.C."/>
            <person name="Goldstein S."/>
            <person name="She X."/>
            <person name="Bult C.J."/>
            <person name="Agarwala R."/>
            <person name="Cherry J.L."/>
            <person name="DiCuccio M."/>
            <person name="Hlavina W."/>
            <person name="Kapustin Y."/>
            <person name="Meric P."/>
            <person name="Maglott D."/>
            <person name="Birtle Z."/>
            <person name="Marques A.C."/>
            <person name="Graves T."/>
            <person name="Zhou S."/>
            <person name="Teague B."/>
            <person name="Potamousis K."/>
            <person name="Churas C."/>
            <person name="Place M."/>
            <person name="Herschleb J."/>
            <person name="Runnheim R."/>
            <person name="Forrest D."/>
            <person name="Amos-Landgraf J."/>
            <person name="Schwartz D.C."/>
            <person name="Cheng Z."/>
            <person name="Lindblad-Toh K."/>
            <person name="Eichler E.E."/>
            <person name="Ponting C.P."/>
        </authorList>
    </citation>
    <scope>NUCLEOTIDE SEQUENCE [LARGE SCALE GENOMIC DNA]</scope>
    <source>
        <strain>C57BL/6J</strain>
    </source>
</reference>
<reference key="3">
    <citation type="journal article" date="2004" name="Genome Res.">
        <title>The status, quality, and expansion of the NIH full-length cDNA project: the Mammalian Gene Collection (MGC).</title>
        <authorList>
            <consortium name="The MGC Project Team"/>
        </authorList>
    </citation>
    <scope>NUCLEOTIDE SEQUENCE [LARGE SCALE MRNA]</scope>
    <source>
        <tissue>Mammary tumor</tissue>
    </source>
</reference>
<reference key="4">
    <citation type="journal article" date="2001" name="Genomics">
        <title>The Stat3/5 locus encodes novel endoplasmic reticulum and helicase-like proteins that are preferentially expressed in normal and neoplastic mammary tissue.</title>
        <authorList>
            <person name="Cui Y."/>
            <person name="Li M."/>
            <person name="Walton K.D."/>
            <person name="Sun K."/>
            <person name="Hanover J.A."/>
            <person name="Furth P.A."/>
            <person name="Hennighausen L."/>
        </authorList>
    </citation>
    <scope>SUBCELLULAR LOCATION</scope>
    <scope>TISSUE SPECIFICITY</scope>
</reference>
<name>GHDC_MOUSE</name>